<organism>
    <name type="scientific">Drosophila willistoni</name>
    <name type="common">Fruit fly</name>
    <dbReference type="NCBI Taxonomy" id="7260"/>
    <lineage>
        <taxon>Eukaryota</taxon>
        <taxon>Metazoa</taxon>
        <taxon>Ecdysozoa</taxon>
        <taxon>Arthropoda</taxon>
        <taxon>Hexapoda</taxon>
        <taxon>Insecta</taxon>
        <taxon>Pterygota</taxon>
        <taxon>Neoptera</taxon>
        <taxon>Endopterygota</taxon>
        <taxon>Diptera</taxon>
        <taxon>Brachycera</taxon>
        <taxon>Muscomorpha</taxon>
        <taxon>Ephydroidea</taxon>
        <taxon>Drosophilidae</taxon>
        <taxon>Drosophila</taxon>
        <taxon>Sophophora</taxon>
    </lineage>
</organism>
<reference evidence="5" key="1">
    <citation type="journal article" date="2007" name="Nature">
        <title>Evolution of genes and genomes on the Drosophila phylogeny.</title>
        <authorList>
            <consortium name="Drosophila 12 genomes consortium"/>
        </authorList>
    </citation>
    <scope>NUCLEOTIDE SEQUENCE [LARGE SCALE GENOMIC DNA]</scope>
    <source>
        <strain evidence="5">Tucson 14030-0811.24</strain>
    </source>
</reference>
<accession>B4MR74</accession>
<evidence type="ECO:0000250" key="1">
    <source>
        <dbReference type="UniProtKB" id="Q7JRJ1"/>
    </source>
</evidence>
<evidence type="ECO:0000250" key="2">
    <source>
        <dbReference type="UniProtKB" id="Q96JC9"/>
    </source>
</evidence>
<evidence type="ECO:0000255" key="3"/>
<evidence type="ECO:0000256" key="4">
    <source>
        <dbReference type="SAM" id="MobiDB-lite"/>
    </source>
</evidence>
<evidence type="ECO:0000312" key="5">
    <source>
        <dbReference type="EMBL" id="EDW74613.1"/>
    </source>
</evidence>
<keyword id="KW-0010">Activator</keyword>
<keyword id="KW-0217">Developmental protein</keyword>
<keyword id="KW-0539">Nucleus</keyword>
<keyword id="KW-0597">Phosphoprotein</keyword>
<keyword id="KW-1185">Reference proteome</keyword>
<keyword id="KW-0804">Transcription</keyword>
<keyword id="KW-0805">Transcription regulation</keyword>
<comment type="function">
    <text evidence="1">Promotes transcriptional elongation by Su(Tpl)/ELL. Essential for development (By similarity).</text>
</comment>
<comment type="subcellular location">
    <subcellularLocation>
        <location evidence="2">Nucleus</location>
    </subcellularLocation>
</comment>
<comment type="similarity">
    <text evidence="3">Belongs to the EAF family.</text>
</comment>
<name>EAF_DROWI</name>
<protein>
    <recommendedName>
        <fullName evidence="1">Ell-associated factor Eaf</fullName>
    </recommendedName>
</protein>
<gene>
    <name evidence="1" type="primary">Eaf</name>
    <name type="ORF">GK22015</name>
</gene>
<dbReference type="EMBL" id="CH963849">
    <property type="protein sequence ID" value="EDW74613.1"/>
    <property type="molecule type" value="Genomic_DNA"/>
</dbReference>
<dbReference type="RefSeq" id="XP_002063627.2">
    <property type="nucleotide sequence ID" value="XM_002063591.2"/>
</dbReference>
<dbReference type="SMR" id="B4MR74"/>
<dbReference type="STRING" id="7260.B4MR74"/>
<dbReference type="EnsemblMetazoa" id="XM_023174914.2">
    <property type="protein sequence ID" value="XP_023030682.1"/>
    <property type="gene ID" value="LOC6640543"/>
</dbReference>
<dbReference type="eggNOG" id="KOG4795">
    <property type="taxonomic scope" value="Eukaryota"/>
</dbReference>
<dbReference type="HOGENOM" id="CLU_025755_2_1_1"/>
<dbReference type="OMA" id="SSHMGKQ"/>
<dbReference type="OrthoDB" id="125903at2759"/>
<dbReference type="PhylomeDB" id="B4MR74"/>
<dbReference type="Proteomes" id="UP000007798">
    <property type="component" value="Unassembled WGS sequence"/>
</dbReference>
<dbReference type="GO" id="GO:0005654">
    <property type="term" value="C:nucleoplasm"/>
    <property type="evidence" value="ECO:0000250"/>
    <property type="project" value="UniProtKB"/>
</dbReference>
<dbReference type="GO" id="GO:0032783">
    <property type="term" value="C:super elongation complex"/>
    <property type="evidence" value="ECO:0007669"/>
    <property type="project" value="EnsemblMetazoa"/>
</dbReference>
<dbReference type="GO" id="GO:0003711">
    <property type="term" value="F:transcription elongation factor activity"/>
    <property type="evidence" value="ECO:0007669"/>
    <property type="project" value="TreeGrafter"/>
</dbReference>
<dbReference type="GO" id="GO:0034605">
    <property type="term" value="P:cellular response to heat"/>
    <property type="evidence" value="ECO:0007669"/>
    <property type="project" value="EnsemblMetazoa"/>
</dbReference>
<dbReference type="GO" id="GO:0045893">
    <property type="term" value="P:positive regulation of DNA-templated transcription"/>
    <property type="evidence" value="ECO:0000250"/>
    <property type="project" value="UniProtKB"/>
</dbReference>
<dbReference type="GO" id="GO:0006368">
    <property type="term" value="P:transcription elongation by RNA polymerase II"/>
    <property type="evidence" value="ECO:0007669"/>
    <property type="project" value="InterPro"/>
</dbReference>
<dbReference type="InterPro" id="IPR027093">
    <property type="entry name" value="EAF_fam"/>
</dbReference>
<dbReference type="InterPro" id="IPR019194">
    <property type="entry name" value="Tscrpt_elong_fac_Eaf_N"/>
</dbReference>
<dbReference type="PANTHER" id="PTHR15970">
    <property type="entry name" value="ELL-ASSOCIATED FACTOR EAF"/>
    <property type="match status" value="1"/>
</dbReference>
<dbReference type="PANTHER" id="PTHR15970:SF2">
    <property type="entry name" value="ELL-ASSOCIATED FACTOR EAF"/>
    <property type="match status" value="1"/>
</dbReference>
<dbReference type="Pfam" id="PF09816">
    <property type="entry name" value="EAF"/>
    <property type="match status" value="1"/>
</dbReference>
<feature type="chain" id="PRO_0000386606" description="Ell-associated factor Eaf">
    <location>
        <begin position="1"/>
        <end position="539"/>
    </location>
</feature>
<feature type="region of interest" description="Disordered" evidence="4">
    <location>
        <begin position="119"/>
        <end position="539"/>
    </location>
</feature>
<feature type="compositionally biased region" description="Polar residues" evidence="4">
    <location>
        <begin position="132"/>
        <end position="146"/>
    </location>
</feature>
<feature type="compositionally biased region" description="Pro residues" evidence="4">
    <location>
        <begin position="151"/>
        <end position="163"/>
    </location>
</feature>
<feature type="compositionally biased region" description="Polar residues" evidence="4">
    <location>
        <begin position="174"/>
        <end position="195"/>
    </location>
</feature>
<feature type="compositionally biased region" description="Polar residues" evidence="4">
    <location>
        <begin position="220"/>
        <end position="238"/>
    </location>
</feature>
<feature type="compositionally biased region" description="Low complexity" evidence="4">
    <location>
        <begin position="267"/>
        <end position="278"/>
    </location>
</feature>
<feature type="compositionally biased region" description="Low complexity" evidence="4">
    <location>
        <begin position="309"/>
        <end position="337"/>
    </location>
</feature>
<feature type="compositionally biased region" description="Low complexity" evidence="4">
    <location>
        <begin position="345"/>
        <end position="375"/>
    </location>
</feature>
<feature type="compositionally biased region" description="Acidic residues" evidence="4">
    <location>
        <begin position="420"/>
        <end position="435"/>
    </location>
</feature>
<feature type="compositionally biased region" description="Low complexity" evidence="4">
    <location>
        <begin position="461"/>
        <end position="493"/>
    </location>
</feature>
<feature type="compositionally biased region" description="Low complexity" evidence="4">
    <location>
        <begin position="520"/>
        <end position="533"/>
    </location>
</feature>
<feature type="modified residue" description="Phosphoserine" evidence="1">
    <location>
        <position position="205"/>
    </location>
</feature>
<proteinExistence type="inferred from homology"/>
<sequence>MMMTKQKNTLADRLNIGGEVRELRLGATFNPKNSSTAFHTIKYDFKPASVDPNRMAAVDVGSNNQVTVTVPNLENSGVPHTVYKGNQRKYAKECLMIYDKETGAITLEKLNHNIQVKKTRSEMTHHKPSFLPATNINHNNIPMSTNGSGPGPGPGPGSGPSPPLSGSASGSGQKLENSTMRISSKTKVSTGSRRNNIIDFKPRNSPMQQSSPSRPVASHRSPQSAPAWNANNAQQTLPSIPMIMDDDDFGLGAALHNGTGGGQANISGSSTGSSTGQPDYGGGGSSSSSTMHRQRQVPQHGQHGKRQQMHQNHQQHPSPPMHQQQQQQQQQQHYGRGINNGGGSNNYAQQQQPQQHHQQQEQQRPSSSSTYSHHSNNMPMDLDFPRENDLTSQTMAQAGAAIEEQIGGVLSASSSSSESDSSDSDSGSESDDSTDDESRPMQQQQLPNLGLGSISPSYNNHQQLQQQPPQQQQQQQQQQQYNHHMQQQHQPQQQHHHHHQQQQQQQQQSDMYTSNRGFPNDLLQNDLQLSSNSSDDDDD</sequence>